<gene>
    <name evidence="1" type="primary">rps10</name>
    <name type="ordered locus">Msp_1365</name>
</gene>
<keyword id="KW-1185">Reference proteome</keyword>
<keyword id="KW-0687">Ribonucleoprotein</keyword>
<keyword id="KW-0689">Ribosomal protein</keyword>
<dbReference type="EMBL" id="CP000102">
    <property type="protein sequence ID" value="ABC57741.1"/>
    <property type="molecule type" value="Genomic_DNA"/>
</dbReference>
<dbReference type="SMR" id="Q2NEL2"/>
<dbReference type="STRING" id="339860.Msp_1365"/>
<dbReference type="KEGG" id="mst:Msp_1365"/>
<dbReference type="eggNOG" id="arCOG01758">
    <property type="taxonomic scope" value="Archaea"/>
</dbReference>
<dbReference type="HOGENOM" id="CLU_122625_0_1_2"/>
<dbReference type="OrthoDB" id="371736at2157"/>
<dbReference type="Proteomes" id="UP000001931">
    <property type="component" value="Chromosome"/>
</dbReference>
<dbReference type="GO" id="GO:0015935">
    <property type="term" value="C:small ribosomal subunit"/>
    <property type="evidence" value="ECO:0007669"/>
    <property type="project" value="InterPro"/>
</dbReference>
<dbReference type="GO" id="GO:0003735">
    <property type="term" value="F:structural constituent of ribosome"/>
    <property type="evidence" value="ECO:0007669"/>
    <property type="project" value="InterPro"/>
</dbReference>
<dbReference type="GO" id="GO:0000049">
    <property type="term" value="F:tRNA binding"/>
    <property type="evidence" value="ECO:0007669"/>
    <property type="project" value="UniProtKB-UniRule"/>
</dbReference>
<dbReference type="GO" id="GO:0006412">
    <property type="term" value="P:translation"/>
    <property type="evidence" value="ECO:0007669"/>
    <property type="project" value="UniProtKB-UniRule"/>
</dbReference>
<dbReference type="FunFam" id="3.30.70.600:FF:000004">
    <property type="entry name" value="30S ribosomal protein S10"/>
    <property type="match status" value="1"/>
</dbReference>
<dbReference type="Gene3D" id="3.30.70.600">
    <property type="entry name" value="Ribosomal protein S10 domain"/>
    <property type="match status" value="1"/>
</dbReference>
<dbReference type="HAMAP" id="MF_00508">
    <property type="entry name" value="Ribosomal_uS10"/>
    <property type="match status" value="1"/>
</dbReference>
<dbReference type="InterPro" id="IPR001848">
    <property type="entry name" value="Ribosomal_uS10"/>
</dbReference>
<dbReference type="InterPro" id="IPR018268">
    <property type="entry name" value="Ribosomal_uS10_CS"/>
</dbReference>
<dbReference type="InterPro" id="IPR027486">
    <property type="entry name" value="Ribosomal_uS10_dom"/>
</dbReference>
<dbReference type="InterPro" id="IPR036838">
    <property type="entry name" value="Ribosomal_uS10_dom_sf"/>
</dbReference>
<dbReference type="InterPro" id="IPR005729">
    <property type="entry name" value="Ribosomal_uS10_euk/arc"/>
</dbReference>
<dbReference type="NCBIfam" id="TIGR01046">
    <property type="entry name" value="uS10_euk_arch"/>
    <property type="match status" value="1"/>
</dbReference>
<dbReference type="PANTHER" id="PTHR11700">
    <property type="entry name" value="30S RIBOSOMAL PROTEIN S10 FAMILY MEMBER"/>
    <property type="match status" value="1"/>
</dbReference>
<dbReference type="Pfam" id="PF00338">
    <property type="entry name" value="Ribosomal_S10"/>
    <property type="match status" value="1"/>
</dbReference>
<dbReference type="PRINTS" id="PR00971">
    <property type="entry name" value="RIBOSOMALS10"/>
</dbReference>
<dbReference type="SMART" id="SM01403">
    <property type="entry name" value="Ribosomal_S10"/>
    <property type="match status" value="1"/>
</dbReference>
<dbReference type="SUPFAM" id="SSF54999">
    <property type="entry name" value="Ribosomal protein S10"/>
    <property type="match status" value="1"/>
</dbReference>
<dbReference type="PROSITE" id="PS00361">
    <property type="entry name" value="RIBOSOMAL_S10"/>
    <property type="match status" value="1"/>
</dbReference>
<name>RS10_METST</name>
<reference key="1">
    <citation type="journal article" date="2006" name="J. Bacteriol.">
        <title>The genome sequence of Methanosphaera stadtmanae reveals why this human intestinal archaeon is restricted to methanol and H2 for methane formation and ATP synthesis.</title>
        <authorList>
            <person name="Fricke W.F."/>
            <person name="Seedorf H."/>
            <person name="Henne A."/>
            <person name="Kruer M."/>
            <person name="Liesegang H."/>
            <person name="Hedderich R."/>
            <person name="Gottschalk G."/>
            <person name="Thauer R.K."/>
        </authorList>
    </citation>
    <scope>NUCLEOTIDE SEQUENCE [LARGE SCALE GENOMIC DNA]</scope>
    <source>
        <strain>ATCC 43021 / DSM 3091 / JCM 11832 / MCB-3</strain>
    </source>
</reference>
<accession>Q2NEL2</accession>
<sequence>MNKARIKLTGTDPEKIADVCNQLKKIAERTGVDLSGPIPLPTKKLVVPTRKSPDGEGKATWEKWELRIHKRLVGIEADERAMRQVMKVNVPDNVSIEIELKA</sequence>
<proteinExistence type="inferred from homology"/>
<comment type="function">
    <text evidence="1">Involved in the binding of tRNA to the ribosomes.</text>
</comment>
<comment type="subunit">
    <text evidence="1">Part of the 30S ribosomal subunit.</text>
</comment>
<comment type="similarity">
    <text evidence="1">Belongs to the universal ribosomal protein uS10 family.</text>
</comment>
<feature type="chain" id="PRO_0000237123" description="Small ribosomal subunit protein uS10">
    <location>
        <begin position="1"/>
        <end position="102"/>
    </location>
</feature>
<protein>
    <recommendedName>
        <fullName evidence="1">Small ribosomal subunit protein uS10</fullName>
    </recommendedName>
    <alternativeName>
        <fullName evidence="2">30S ribosomal protein S10</fullName>
    </alternativeName>
</protein>
<organism>
    <name type="scientific">Methanosphaera stadtmanae (strain ATCC 43021 / DSM 3091 / JCM 11832 / MCB-3)</name>
    <dbReference type="NCBI Taxonomy" id="339860"/>
    <lineage>
        <taxon>Archaea</taxon>
        <taxon>Methanobacteriati</taxon>
        <taxon>Methanobacteriota</taxon>
        <taxon>Methanomada group</taxon>
        <taxon>Methanobacteria</taxon>
        <taxon>Methanobacteriales</taxon>
        <taxon>Methanobacteriaceae</taxon>
        <taxon>Methanosphaera</taxon>
    </lineage>
</organism>
<evidence type="ECO:0000255" key="1">
    <source>
        <dbReference type="HAMAP-Rule" id="MF_00508"/>
    </source>
</evidence>
<evidence type="ECO:0000305" key="2"/>